<organism>
    <name type="scientific">Thermococcus onnurineus (strain NA1)</name>
    <dbReference type="NCBI Taxonomy" id="523850"/>
    <lineage>
        <taxon>Archaea</taxon>
        <taxon>Methanobacteriati</taxon>
        <taxon>Methanobacteriota</taxon>
        <taxon>Thermococci</taxon>
        <taxon>Thermococcales</taxon>
        <taxon>Thermococcaceae</taxon>
        <taxon>Thermococcus</taxon>
    </lineage>
</organism>
<keyword id="KW-0066">ATP synthesis</keyword>
<keyword id="KW-1003">Cell membrane</keyword>
<keyword id="KW-0375">Hydrogen ion transport</keyword>
<keyword id="KW-0406">Ion transport</keyword>
<keyword id="KW-0472">Membrane</keyword>
<keyword id="KW-0813">Transport</keyword>
<feature type="chain" id="PRO_1000132914" description="A-type ATP synthase subunit C">
    <location>
        <begin position="1"/>
        <end position="366"/>
    </location>
</feature>
<protein>
    <recommendedName>
        <fullName evidence="1">A-type ATP synthase subunit C</fullName>
    </recommendedName>
</protein>
<sequence>METGAVTGILNTTLAVVFTWVGYKTARIVWKYTPYSYPNARIKAMEAKLLSEQRFNELAESRTLNNFVVSLEDTDYKDYLASVSNYTVEEIERALERALAGTYELMVTILPKRVNPFFRLLLEEWDVRNITSVIKAKMVNEPASDYVVEIGTMLPKVKAMAEAKTMEEILVILEGTPYEEPYQKLLLGEISLKEFETELYRMYYAKLLNYALSKKEDERVILEEFVRLKIDKTNILTLLRAKAAKMGAEEIKPLIIPGGTIKLDSILHVDDLSMALAELDSTRYGAVIRDVREEVERDLSVLERALDRHIRERMNELTRFYPLSVATPLSYILQKEREVRKLRAIAKLIDDGVEPERIKELVGDAA</sequence>
<dbReference type="EMBL" id="CP000855">
    <property type="protein sequence ID" value="ACJ17240.1"/>
    <property type="molecule type" value="Genomic_DNA"/>
</dbReference>
<dbReference type="RefSeq" id="WP_012572712.1">
    <property type="nucleotide sequence ID" value="NC_011529.1"/>
</dbReference>
<dbReference type="SMR" id="B6YV12"/>
<dbReference type="STRING" id="523850.TON_1750"/>
<dbReference type="GeneID" id="7017419"/>
<dbReference type="KEGG" id="ton:TON_1750"/>
<dbReference type="PATRIC" id="fig|523850.10.peg.1763"/>
<dbReference type="eggNOG" id="arCOG02459">
    <property type="taxonomic scope" value="Archaea"/>
</dbReference>
<dbReference type="HOGENOM" id="CLU_059311_0_0_2"/>
<dbReference type="OrthoDB" id="4272at2157"/>
<dbReference type="Proteomes" id="UP000002727">
    <property type="component" value="Chromosome"/>
</dbReference>
<dbReference type="GO" id="GO:0005886">
    <property type="term" value="C:plasma membrane"/>
    <property type="evidence" value="ECO:0007669"/>
    <property type="project" value="UniProtKB-SubCell"/>
</dbReference>
<dbReference type="GO" id="GO:0033179">
    <property type="term" value="C:proton-transporting V-type ATPase, V0 domain"/>
    <property type="evidence" value="ECO:0007669"/>
    <property type="project" value="InterPro"/>
</dbReference>
<dbReference type="GO" id="GO:0005524">
    <property type="term" value="F:ATP binding"/>
    <property type="evidence" value="ECO:0007669"/>
    <property type="project" value="UniProtKB-UniRule"/>
</dbReference>
<dbReference type="GO" id="GO:0046933">
    <property type="term" value="F:proton-transporting ATP synthase activity, rotational mechanism"/>
    <property type="evidence" value="ECO:0007669"/>
    <property type="project" value="UniProtKB-UniRule"/>
</dbReference>
<dbReference type="GO" id="GO:0046961">
    <property type="term" value="F:proton-transporting ATPase activity, rotational mechanism"/>
    <property type="evidence" value="ECO:0007669"/>
    <property type="project" value="InterPro"/>
</dbReference>
<dbReference type="GO" id="GO:0042777">
    <property type="term" value="P:proton motive force-driven plasma membrane ATP synthesis"/>
    <property type="evidence" value="ECO:0007669"/>
    <property type="project" value="UniProtKB-UniRule"/>
</dbReference>
<dbReference type="Gene3D" id="1.10.132.50">
    <property type="entry name" value="ATP synthase (C/AC39) subunit, domain 3"/>
    <property type="match status" value="1"/>
</dbReference>
<dbReference type="Gene3D" id="1.20.1690.10">
    <property type="entry name" value="V-type ATP synthase subunit C domain"/>
    <property type="match status" value="2"/>
</dbReference>
<dbReference type="HAMAP" id="MF_00314">
    <property type="entry name" value="ATP_synth_C_arch"/>
    <property type="match status" value="1"/>
</dbReference>
<dbReference type="InterPro" id="IPR036079">
    <property type="entry name" value="ATPase_csu/dsu_sf"/>
</dbReference>
<dbReference type="InterPro" id="IPR014272">
    <property type="entry name" value="ATPase_V0-cplx_csu"/>
</dbReference>
<dbReference type="InterPro" id="IPR002843">
    <property type="entry name" value="ATPase_V0-cplx_csu/dsu"/>
</dbReference>
<dbReference type="InterPro" id="IPR050873">
    <property type="entry name" value="V-ATPase_V0D/AC39_subunit"/>
</dbReference>
<dbReference type="InterPro" id="IPR035067">
    <property type="entry name" value="V-type_ATPase_csu/dsu"/>
</dbReference>
<dbReference type="InterPro" id="IPR044911">
    <property type="entry name" value="V-type_ATPase_csu/dsu_dom_3"/>
</dbReference>
<dbReference type="NCBIfam" id="TIGR02923">
    <property type="entry name" value="AhaC"/>
    <property type="match status" value="1"/>
</dbReference>
<dbReference type="NCBIfam" id="NF002269">
    <property type="entry name" value="PRK01198.1-5"/>
    <property type="match status" value="1"/>
</dbReference>
<dbReference type="PANTHER" id="PTHR38682">
    <property type="entry name" value="V-TYPE ATP SYNTHASE SUBUNIT C"/>
    <property type="match status" value="1"/>
</dbReference>
<dbReference type="PANTHER" id="PTHR38682:SF1">
    <property type="entry name" value="V-TYPE ATP SYNTHASE SUBUNIT C"/>
    <property type="match status" value="1"/>
</dbReference>
<dbReference type="Pfam" id="PF01992">
    <property type="entry name" value="vATP-synt_AC39"/>
    <property type="match status" value="1"/>
</dbReference>
<dbReference type="SUPFAM" id="SSF103486">
    <property type="entry name" value="V-type ATP synthase subunit C"/>
    <property type="match status" value="1"/>
</dbReference>
<comment type="function">
    <text evidence="1">Component of the A-type ATP synthase that produces ATP from ADP in the presence of a proton gradient across the membrane.</text>
</comment>
<comment type="subunit">
    <text evidence="1">Has multiple subunits with at least A(3), B(3), C, D, E, F, H, I and proteolipid K(x).</text>
</comment>
<comment type="subcellular location">
    <subcellularLocation>
        <location evidence="1">Cell membrane</location>
        <topology evidence="1">Peripheral membrane protein</topology>
    </subcellularLocation>
</comment>
<comment type="similarity">
    <text evidence="1">Belongs to the V-ATPase V0D/AC39 subunit family.</text>
</comment>
<name>AATC_THEON</name>
<evidence type="ECO:0000255" key="1">
    <source>
        <dbReference type="HAMAP-Rule" id="MF_00314"/>
    </source>
</evidence>
<gene>
    <name evidence="1" type="primary">atpC</name>
    <name type="ordered locus">TON_1750</name>
</gene>
<proteinExistence type="inferred from homology"/>
<accession>B6YV12</accession>
<reference key="1">
    <citation type="journal article" date="2008" name="J. Bacteriol.">
        <title>The complete genome sequence of Thermococcus onnurineus NA1 reveals a mixed heterotrophic and carboxydotrophic metabolism.</title>
        <authorList>
            <person name="Lee H.S."/>
            <person name="Kang S.G."/>
            <person name="Bae S.S."/>
            <person name="Lim J.K."/>
            <person name="Cho Y."/>
            <person name="Kim Y.J."/>
            <person name="Jeon J.H."/>
            <person name="Cha S.-S."/>
            <person name="Kwon K.K."/>
            <person name="Kim H.-T."/>
            <person name="Park C.-J."/>
            <person name="Lee H.-W."/>
            <person name="Kim S.I."/>
            <person name="Chun J."/>
            <person name="Colwell R.R."/>
            <person name="Kim S.-J."/>
            <person name="Lee J.-H."/>
        </authorList>
    </citation>
    <scope>NUCLEOTIDE SEQUENCE [LARGE SCALE GENOMIC DNA]</scope>
    <source>
        <strain>NA1</strain>
    </source>
</reference>